<keyword id="KW-0067">ATP-binding</keyword>
<keyword id="KW-0436">Ligase</keyword>
<keyword id="KW-0547">Nucleotide-binding</keyword>
<keyword id="KW-0648">Protein biosynthesis</keyword>
<organism>
    <name type="scientific">Dehalococcoides mccartyi (strain CBDB1)</name>
    <dbReference type="NCBI Taxonomy" id="255470"/>
    <lineage>
        <taxon>Bacteria</taxon>
        <taxon>Bacillati</taxon>
        <taxon>Chloroflexota</taxon>
        <taxon>Dehalococcoidia</taxon>
        <taxon>Dehalococcoidales</taxon>
        <taxon>Dehalococcoidaceae</taxon>
        <taxon>Dehalococcoides</taxon>
    </lineage>
</organism>
<sequence length="95" mass="10889">MKLNREDVLHIARLARLGLEEDEINRLSKELSALLEHFEVLQQVDTTGVEPTSQSTPVKSVLKEDIIKSSYAREDILSNAPRREGDYVRIRVVME</sequence>
<name>GATC_DEHMC</name>
<protein>
    <recommendedName>
        <fullName evidence="1">Aspartyl/glutamyl-tRNA(Asn/Gln) amidotransferase subunit C</fullName>
        <shortName evidence="1">Asp/Glu-ADT subunit C</shortName>
        <ecNumber evidence="1">6.3.5.-</ecNumber>
    </recommendedName>
</protein>
<feature type="chain" id="PRO_1000071386" description="Aspartyl/glutamyl-tRNA(Asn/Gln) amidotransferase subunit C">
    <location>
        <begin position="1"/>
        <end position="95"/>
    </location>
</feature>
<dbReference type="EC" id="6.3.5.-" evidence="1"/>
<dbReference type="EMBL" id="AJ965256">
    <property type="protein sequence ID" value="CAI83341.1"/>
    <property type="molecule type" value="Genomic_DNA"/>
</dbReference>
<dbReference type="RefSeq" id="WP_011309692.1">
    <property type="nucleotide sequence ID" value="NC_007356.1"/>
</dbReference>
<dbReference type="SMR" id="Q3ZYM6"/>
<dbReference type="KEGG" id="deh:cbdbA1282"/>
<dbReference type="HOGENOM" id="CLU_105899_2_0_0"/>
<dbReference type="Proteomes" id="UP000000433">
    <property type="component" value="Chromosome"/>
</dbReference>
<dbReference type="GO" id="GO:0050566">
    <property type="term" value="F:asparaginyl-tRNA synthase (glutamine-hydrolyzing) activity"/>
    <property type="evidence" value="ECO:0007669"/>
    <property type="project" value="RHEA"/>
</dbReference>
<dbReference type="GO" id="GO:0005524">
    <property type="term" value="F:ATP binding"/>
    <property type="evidence" value="ECO:0007669"/>
    <property type="project" value="UniProtKB-KW"/>
</dbReference>
<dbReference type="GO" id="GO:0050567">
    <property type="term" value="F:glutaminyl-tRNA synthase (glutamine-hydrolyzing) activity"/>
    <property type="evidence" value="ECO:0007669"/>
    <property type="project" value="UniProtKB-UniRule"/>
</dbReference>
<dbReference type="GO" id="GO:0070681">
    <property type="term" value="P:glutaminyl-tRNAGln biosynthesis via transamidation"/>
    <property type="evidence" value="ECO:0007669"/>
    <property type="project" value="TreeGrafter"/>
</dbReference>
<dbReference type="GO" id="GO:0006450">
    <property type="term" value="P:regulation of translational fidelity"/>
    <property type="evidence" value="ECO:0007669"/>
    <property type="project" value="InterPro"/>
</dbReference>
<dbReference type="GO" id="GO:0006412">
    <property type="term" value="P:translation"/>
    <property type="evidence" value="ECO:0007669"/>
    <property type="project" value="UniProtKB-UniRule"/>
</dbReference>
<dbReference type="Gene3D" id="1.10.20.60">
    <property type="entry name" value="Glu-tRNAGln amidotransferase C subunit, N-terminal domain"/>
    <property type="match status" value="1"/>
</dbReference>
<dbReference type="HAMAP" id="MF_00122">
    <property type="entry name" value="GatC"/>
    <property type="match status" value="1"/>
</dbReference>
<dbReference type="InterPro" id="IPR036113">
    <property type="entry name" value="Asp/Glu-ADT_sf_sub_c"/>
</dbReference>
<dbReference type="InterPro" id="IPR003837">
    <property type="entry name" value="GatC"/>
</dbReference>
<dbReference type="NCBIfam" id="TIGR00135">
    <property type="entry name" value="gatC"/>
    <property type="match status" value="1"/>
</dbReference>
<dbReference type="PANTHER" id="PTHR15004">
    <property type="entry name" value="GLUTAMYL-TRNA(GLN) AMIDOTRANSFERASE SUBUNIT C, MITOCHONDRIAL"/>
    <property type="match status" value="1"/>
</dbReference>
<dbReference type="PANTHER" id="PTHR15004:SF0">
    <property type="entry name" value="GLUTAMYL-TRNA(GLN) AMIDOTRANSFERASE SUBUNIT C, MITOCHONDRIAL"/>
    <property type="match status" value="1"/>
</dbReference>
<dbReference type="Pfam" id="PF02686">
    <property type="entry name" value="GatC"/>
    <property type="match status" value="1"/>
</dbReference>
<dbReference type="SUPFAM" id="SSF141000">
    <property type="entry name" value="Glu-tRNAGln amidotransferase C subunit"/>
    <property type="match status" value="1"/>
</dbReference>
<comment type="function">
    <text evidence="1">Allows the formation of correctly charged Asn-tRNA(Asn) or Gln-tRNA(Gln) through the transamidation of misacylated Asp-tRNA(Asn) or Glu-tRNA(Gln) in organisms which lack either or both of asparaginyl-tRNA or glutaminyl-tRNA synthetases. The reaction takes place in the presence of glutamine and ATP through an activated phospho-Asp-tRNA(Asn) or phospho-Glu-tRNA(Gln).</text>
</comment>
<comment type="catalytic activity">
    <reaction evidence="1">
        <text>L-glutamyl-tRNA(Gln) + L-glutamine + ATP + H2O = L-glutaminyl-tRNA(Gln) + L-glutamate + ADP + phosphate + H(+)</text>
        <dbReference type="Rhea" id="RHEA:17521"/>
        <dbReference type="Rhea" id="RHEA-COMP:9681"/>
        <dbReference type="Rhea" id="RHEA-COMP:9684"/>
        <dbReference type="ChEBI" id="CHEBI:15377"/>
        <dbReference type="ChEBI" id="CHEBI:15378"/>
        <dbReference type="ChEBI" id="CHEBI:29985"/>
        <dbReference type="ChEBI" id="CHEBI:30616"/>
        <dbReference type="ChEBI" id="CHEBI:43474"/>
        <dbReference type="ChEBI" id="CHEBI:58359"/>
        <dbReference type="ChEBI" id="CHEBI:78520"/>
        <dbReference type="ChEBI" id="CHEBI:78521"/>
        <dbReference type="ChEBI" id="CHEBI:456216"/>
    </reaction>
</comment>
<comment type="catalytic activity">
    <reaction evidence="1">
        <text>L-aspartyl-tRNA(Asn) + L-glutamine + ATP + H2O = L-asparaginyl-tRNA(Asn) + L-glutamate + ADP + phosphate + 2 H(+)</text>
        <dbReference type="Rhea" id="RHEA:14513"/>
        <dbReference type="Rhea" id="RHEA-COMP:9674"/>
        <dbReference type="Rhea" id="RHEA-COMP:9677"/>
        <dbReference type="ChEBI" id="CHEBI:15377"/>
        <dbReference type="ChEBI" id="CHEBI:15378"/>
        <dbReference type="ChEBI" id="CHEBI:29985"/>
        <dbReference type="ChEBI" id="CHEBI:30616"/>
        <dbReference type="ChEBI" id="CHEBI:43474"/>
        <dbReference type="ChEBI" id="CHEBI:58359"/>
        <dbReference type="ChEBI" id="CHEBI:78515"/>
        <dbReference type="ChEBI" id="CHEBI:78516"/>
        <dbReference type="ChEBI" id="CHEBI:456216"/>
    </reaction>
</comment>
<comment type="subunit">
    <text evidence="1">Heterotrimer of A, B and C subunits.</text>
</comment>
<comment type="similarity">
    <text evidence="1">Belongs to the GatC family.</text>
</comment>
<evidence type="ECO:0000255" key="1">
    <source>
        <dbReference type="HAMAP-Rule" id="MF_00122"/>
    </source>
</evidence>
<gene>
    <name evidence="1" type="primary">gatC</name>
    <name type="ordered locus">cbdbA1282</name>
</gene>
<accession>Q3ZYM6</accession>
<reference key="1">
    <citation type="journal article" date="2005" name="Nat. Biotechnol.">
        <title>Genome sequence of the chlorinated compound-respiring bacterium Dehalococcoides species strain CBDB1.</title>
        <authorList>
            <person name="Kube M."/>
            <person name="Beck A."/>
            <person name="Zinder S.H."/>
            <person name="Kuhl H."/>
            <person name="Reinhardt R."/>
            <person name="Adrian L."/>
        </authorList>
    </citation>
    <scope>NUCLEOTIDE SEQUENCE [LARGE SCALE GENOMIC DNA]</scope>
    <source>
        <strain>CBDB1</strain>
    </source>
</reference>
<proteinExistence type="inferred from homology"/>